<accession>A4SE02</accession>
<organism>
    <name type="scientific">Chlorobium phaeovibrioides (strain DSM 265 / 1930)</name>
    <name type="common">Prosthecochloris vibrioformis (strain DSM 265)</name>
    <dbReference type="NCBI Taxonomy" id="290318"/>
    <lineage>
        <taxon>Bacteria</taxon>
        <taxon>Pseudomonadati</taxon>
        <taxon>Chlorobiota</taxon>
        <taxon>Chlorobiia</taxon>
        <taxon>Chlorobiales</taxon>
        <taxon>Chlorobiaceae</taxon>
        <taxon>Chlorobium/Pelodictyon group</taxon>
        <taxon>Chlorobium</taxon>
    </lineage>
</organism>
<reference key="1">
    <citation type="submission" date="2007-03" db="EMBL/GenBank/DDBJ databases">
        <title>Complete sequence of Prosthecochloris vibrioformis DSM 265.</title>
        <authorList>
            <consortium name="US DOE Joint Genome Institute"/>
            <person name="Copeland A."/>
            <person name="Lucas S."/>
            <person name="Lapidus A."/>
            <person name="Barry K."/>
            <person name="Detter J.C."/>
            <person name="Glavina del Rio T."/>
            <person name="Hammon N."/>
            <person name="Israni S."/>
            <person name="Pitluck S."/>
            <person name="Schmutz J."/>
            <person name="Larimer F."/>
            <person name="Land M."/>
            <person name="Hauser L."/>
            <person name="Mikhailova N."/>
            <person name="Li T."/>
            <person name="Overmann J."/>
            <person name="Schuster S.C."/>
            <person name="Bryant D.A."/>
            <person name="Richardson P."/>
        </authorList>
    </citation>
    <scope>NUCLEOTIDE SEQUENCE [LARGE SCALE GENOMIC DNA]</scope>
    <source>
        <strain>DSM 265 / 1930</strain>
    </source>
</reference>
<keyword id="KW-0030">Aminoacyl-tRNA synthetase</keyword>
<keyword id="KW-0067">ATP-binding</keyword>
<keyword id="KW-0963">Cytoplasm</keyword>
<keyword id="KW-0436">Ligase</keyword>
<keyword id="KW-0547">Nucleotide-binding</keyword>
<keyword id="KW-0648">Protein biosynthesis</keyword>
<protein>
    <recommendedName>
        <fullName evidence="1">Histidine--tRNA ligase</fullName>
        <ecNumber evidence="1">6.1.1.21</ecNumber>
    </recommendedName>
    <alternativeName>
        <fullName evidence="1">Histidyl-tRNA synthetase</fullName>
        <shortName evidence="1">HisRS</shortName>
    </alternativeName>
</protein>
<dbReference type="EC" id="6.1.1.21" evidence="1"/>
<dbReference type="EMBL" id="CP000607">
    <property type="protein sequence ID" value="ABP36711.1"/>
    <property type="molecule type" value="Genomic_DNA"/>
</dbReference>
<dbReference type="SMR" id="A4SE02"/>
<dbReference type="STRING" id="290318.Cvib_0696"/>
<dbReference type="KEGG" id="pvi:Cvib_0696"/>
<dbReference type="eggNOG" id="COG0124">
    <property type="taxonomic scope" value="Bacteria"/>
</dbReference>
<dbReference type="HOGENOM" id="CLU_025113_1_1_10"/>
<dbReference type="OrthoDB" id="9800814at2"/>
<dbReference type="GO" id="GO:0005737">
    <property type="term" value="C:cytoplasm"/>
    <property type="evidence" value="ECO:0007669"/>
    <property type="project" value="UniProtKB-SubCell"/>
</dbReference>
<dbReference type="GO" id="GO:0005524">
    <property type="term" value="F:ATP binding"/>
    <property type="evidence" value="ECO:0007669"/>
    <property type="project" value="UniProtKB-UniRule"/>
</dbReference>
<dbReference type="GO" id="GO:0004821">
    <property type="term" value="F:histidine-tRNA ligase activity"/>
    <property type="evidence" value="ECO:0007669"/>
    <property type="project" value="UniProtKB-UniRule"/>
</dbReference>
<dbReference type="GO" id="GO:0006427">
    <property type="term" value="P:histidyl-tRNA aminoacylation"/>
    <property type="evidence" value="ECO:0007669"/>
    <property type="project" value="UniProtKB-UniRule"/>
</dbReference>
<dbReference type="CDD" id="cd00773">
    <property type="entry name" value="HisRS-like_core"/>
    <property type="match status" value="1"/>
</dbReference>
<dbReference type="CDD" id="cd00859">
    <property type="entry name" value="HisRS_anticodon"/>
    <property type="match status" value="1"/>
</dbReference>
<dbReference type="Gene3D" id="3.40.50.800">
    <property type="entry name" value="Anticodon-binding domain"/>
    <property type="match status" value="1"/>
</dbReference>
<dbReference type="Gene3D" id="3.30.930.10">
    <property type="entry name" value="Bira Bifunctional Protein, Domain 2"/>
    <property type="match status" value="1"/>
</dbReference>
<dbReference type="HAMAP" id="MF_00127">
    <property type="entry name" value="His_tRNA_synth"/>
    <property type="match status" value="1"/>
</dbReference>
<dbReference type="InterPro" id="IPR006195">
    <property type="entry name" value="aa-tRNA-synth_II"/>
</dbReference>
<dbReference type="InterPro" id="IPR045864">
    <property type="entry name" value="aa-tRNA-synth_II/BPL/LPL"/>
</dbReference>
<dbReference type="InterPro" id="IPR004154">
    <property type="entry name" value="Anticodon-bd"/>
</dbReference>
<dbReference type="InterPro" id="IPR036621">
    <property type="entry name" value="Anticodon-bd_dom_sf"/>
</dbReference>
<dbReference type="InterPro" id="IPR015807">
    <property type="entry name" value="His-tRNA-ligase"/>
</dbReference>
<dbReference type="InterPro" id="IPR041715">
    <property type="entry name" value="HisRS-like_core"/>
</dbReference>
<dbReference type="InterPro" id="IPR004516">
    <property type="entry name" value="HisRS/HisZ"/>
</dbReference>
<dbReference type="InterPro" id="IPR033656">
    <property type="entry name" value="HisRS_anticodon"/>
</dbReference>
<dbReference type="NCBIfam" id="TIGR00442">
    <property type="entry name" value="hisS"/>
    <property type="match status" value="1"/>
</dbReference>
<dbReference type="PANTHER" id="PTHR43707:SF1">
    <property type="entry name" value="HISTIDINE--TRNA LIGASE, MITOCHONDRIAL-RELATED"/>
    <property type="match status" value="1"/>
</dbReference>
<dbReference type="PANTHER" id="PTHR43707">
    <property type="entry name" value="HISTIDYL-TRNA SYNTHETASE"/>
    <property type="match status" value="1"/>
</dbReference>
<dbReference type="Pfam" id="PF03129">
    <property type="entry name" value="HGTP_anticodon"/>
    <property type="match status" value="1"/>
</dbReference>
<dbReference type="Pfam" id="PF13393">
    <property type="entry name" value="tRNA-synt_His"/>
    <property type="match status" value="1"/>
</dbReference>
<dbReference type="PIRSF" id="PIRSF001549">
    <property type="entry name" value="His-tRNA_synth"/>
    <property type="match status" value="1"/>
</dbReference>
<dbReference type="SUPFAM" id="SSF52954">
    <property type="entry name" value="Class II aaRS ABD-related"/>
    <property type="match status" value="1"/>
</dbReference>
<dbReference type="SUPFAM" id="SSF55681">
    <property type="entry name" value="Class II aaRS and biotin synthetases"/>
    <property type="match status" value="1"/>
</dbReference>
<dbReference type="PROSITE" id="PS50862">
    <property type="entry name" value="AA_TRNA_LIGASE_II"/>
    <property type="match status" value="1"/>
</dbReference>
<feature type="chain" id="PRO_1000076280" description="Histidine--tRNA ligase">
    <location>
        <begin position="1"/>
        <end position="426"/>
    </location>
</feature>
<proteinExistence type="inferred from homology"/>
<comment type="catalytic activity">
    <reaction evidence="1">
        <text>tRNA(His) + L-histidine + ATP = L-histidyl-tRNA(His) + AMP + diphosphate + H(+)</text>
        <dbReference type="Rhea" id="RHEA:17313"/>
        <dbReference type="Rhea" id="RHEA-COMP:9665"/>
        <dbReference type="Rhea" id="RHEA-COMP:9689"/>
        <dbReference type="ChEBI" id="CHEBI:15378"/>
        <dbReference type="ChEBI" id="CHEBI:30616"/>
        <dbReference type="ChEBI" id="CHEBI:33019"/>
        <dbReference type="ChEBI" id="CHEBI:57595"/>
        <dbReference type="ChEBI" id="CHEBI:78442"/>
        <dbReference type="ChEBI" id="CHEBI:78527"/>
        <dbReference type="ChEBI" id="CHEBI:456215"/>
        <dbReference type="EC" id="6.1.1.21"/>
    </reaction>
</comment>
<comment type="subunit">
    <text evidence="1">Homodimer.</text>
</comment>
<comment type="subcellular location">
    <subcellularLocation>
        <location evidence="1">Cytoplasm</location>
    </subcellularLocation>
</comment>
<comment type="similarity">
    <text evidence="1">Belongs to the class-II aminoacyl-tRNA synthetase family.</text>
</comment>
<sequence>MSQYQAVKGTKDVFPDEAVQWQLVEGVVRRLAGLYAFGEVRTPVFEYTELFQRGIGATTDIVGKEMFSFLPDPQGRSLTLRPEMTAGVMRAALQRNLLSQAPLHKLFYISDLFRKERPQAGRQRQFTQFGAELLGASSPAAVAEVLSFMMGVFDALGLKGLRLRINTLGDLEDRARYRDALRAYFLPFADELDESSKERLEKNPLRILDSKNPALKELIAAAPRLFDFVKAEGVAEFEEVLSLLRDRGVSYEVDHLLVRGLDYYCHTAFEVTSSELGAQDAIGGGGRYDGLARELGGGKDMPAVGFAVGMERLLIAMEKQGLLEGLKPVGPKVFVVVQQLELSGHAMQVAFQLRRAGISTELDLAGRSMKAQMREANRLGAAYALFIGQTEFESGQYGLKNLVSSEQSTLTLDSITETLREPLLCG</sequence>
<gene>
    <name evidence="1" type="primary">hisS</name>
    <name type="ordered locus">Cvib_0696</name>
</gene>
<evidence type="ECO:0000255" key="1">
    <source>
        <dbReference type="HAMAP-Rule" id="MF_00127"/>
    </source>
</evidence>
<name>SYH_CHLPM</name>